<feature type="chain" id="PRO_0000096838" description="Protein NifZ">
    <location>
        <begin position="1"/>
        <end position="192"/>
    </location>
</feature>
<feature type="region of interest" description="Disordered" evidence="1">
    <location>
        <begin position="77"/>
        <end position="102"/>
    </location>
</feature>
<feature type="region of interest" description="Disordered" evidence="1">
    <location>
        <begin position="117"/>
        <end position="192"/>
    </location>
</feature>
<feature type="compositionally biased region" description="Low complexity" evidence="1">
    <location>
        <begin position="85"/>
        <end position="102"/>
    </location>
</feature>
<feature type="compositionally biased region" description="Low complexity" evidence="1">
    <location>
        <begin position="150"/>
        <end position="165"/>
    </location>
</feature>
<proteinExistence type="inferred from homology"/>
<reference key="1">
    <citation type="journal article" date="1995" name="Gene">
        <title>Sequences of nifX, nifW, nifZ, nifB and two ORF in the Frankia nitrogen fixation gene cluster.</title>
        <authorList>
            <person name="Harriott O.T."/>
            <person name="Hosted T.J."/>
            <person name="Benson D.R."/>
        </authorList>
    </citation>
    <scope>NUCLEOTIDE SEQUENCE [GENOMIC DNA]</scope>
    <source>
        <strain>CpI1</strain>
    </source>
</reference>
<gene>
    <name type="primary">nifZ</name>
</gene>
<keyword id="KW-0535">Nitrogen fixation</keyword>
<protein>
    <recommendedName>
        <fullName>Protein NifZ</fullName>
    </recommendedName>
</protein>
<sequence length="192" mass="19002">MTTNTYDVGDVVMAAKALRNDGTYPDPAISIGEILVEAGTRGQVINVGLYLQEHIVYAIAFENGRIVGALERELEAAEDAEDATQAEPAATPTAAAAAEGSAPAAVLVAEKVPAEPAAHGAGGHAAKTCKHGSANCKSAAADAEPAVPSTPAEPAKAATPAKPATPAKPAPPAKPAGKTVGAGTPGAKDGRR</sequence>
<comment type="similarity">
    <text evidence="2">Belongs to the NifZ family.</text>
</comment>
<evidence type="ECO:0000256" key="1">
    <source>
        <dbReference type="SAM" id="MobiDB-lite"/>
    </source>
</evidence>
<evidence type="ECO:0000305" key="2"/>
<organism>
    <name type="scientific">Frankia alni</name>
    <dbReference type="NCBI Taxonomy" id="1859"/>
    <lineage>
        <taxon>Bacteria</taxon>
        <taxon>Bacillati</taxon>
        <taxon>Actinomycetota</taxon>
        <taxon>Actinomycetes</taxon>
        <taxon>Frankiales</taxon>
        <taxon>Frankiaceae</taxon>
        <taxon>Frankia</taxon>
    </lineage>
</organism>
<dbReference type="EMBL" id="L29299">
    <property type="protein sequence ID" value="AAC82974.1"/>
    <property type="molecule type" value="Genomic_DNA"/>
</dbReference>
<dbReference type="PIR" id="T09236">
    <property type="entry name" value="T09236"/>
</dbReference>
<dbReference type="GO" id="GO:0009399">
    <property type="term" value="P:nitrogen fixation"/>
    <property type="evidence" value="ECO:0007669"/>
    <property type="project" value="UniProtKB-KW"/>
</dbReference>
<dbReference type="InterPro" id="IPR007415">
    <property type="entry name" value="Nitrogenase_MoFe_mat_NifZ"/>
</dbReference>
<dbReference type="Pfam" id="PF04319">
    <property type="entry name" value="NifZ"/>
    <property type="match status" value="1"/>
</dbReference>
<accession>P46040</accession>
<name>NIFZ_FRAAL</name>